<keyword id="KW-0004">4Fe-4S</keyword>
<keyword id="KW-0963">Cytoplasm</keyword>
<keyword id="KW-0408">Iron</keyword>
<keyword id="KW-0411">Iron-sulfur</keyword>
<keyword id="KW-0479">Metal-binding</keyword>
<keyword id="KW-1185">Reference proteome</keyword>
<keyword id="KW-0949">S-adenosyl-L-methionine</keyword>
<keyword id="KW-0808">Transferase</keyword>
<keyword id="KW-0819">tRNA processing</keyword>
<accession>Q8EQR4</accession>
<organism>
    <name type="scientific">Oceanobacillus iheyensis (strain DSM 14371 / CIP 107618 / JCM 11309 / KCTC 3954 / HTE831)</name>
    <dbReference type="NCBI Taxonomy" id="221109"/>
    <lineage>
        <taxon>Bacteria</taxon>
        <taxon>Bacillati</taxon>
        <taxon>Bacillota</taxon>
        <taxon>Bacilli</taxon>
        <taxon>Bacillales</taxon>
        <taxon>Bacillaceae</taxon>
        <taxon>Oceanobacillus</taxon>
    </lineage>
</organism>
<reference key="1">
    <citation type="journal article" date="2002" name="Nucleic Acids Res.">
        <title>Genome sequence of Oceanobacillus iheyensis isolated from the Iheya Ridge and its unexpected adaptive capabilities to extreme environments.</title>
        <authorList>
            <person name="Takami H."/>
            <person name="Takaki Y."/>
            <person name="Uchiyama I."/>
        </authorList>
    </citation>
    <scope>NUCLEOTIDE SEQUENCE [LARGE SCALE GENOMIC DNA]</scope>
    <source>
        <strain>DSM 14371 / CIP 107618 / JCM 11309 / KCTC 3954 / HTE831</strain>
    </source>
</reference>
<evidence type="ECO:0000255" key="1">
    <source>
        <dbReference type="HAMAP-Rule" id="MF_01864"/>
    </source>
</evidence>
<evidence type="ECO:0000255" key="2">
    <source>
        <dbReference type="PROSITE-ProRule" id="PRU01266"/>
    </source>
</evidence>
<evidence type="ECO:0000256" key="3">
    <source>
        <dbReference type="SAM" id="MobiDB-lite"/>
    </source>
</evidence>
<dbReference type="EC" id="2.8.4.3" evidence="1"/>
<dbReference type="EMBL" id="BA000028">
    <property type="protein sequence ID" value="BAC13584.1"/>
    <property type="molecule type" value="Genomic_DNA"/>
</dbReference>
<dbReference type="RefSeq" id="WP_011066028.1">
    <property type="nucleotide sequence ID" value="NC_004193.1"/>
</dbReference>
<dbReference type="SMR" id="Q8EQR4"/>
<dbReference type="STRING" id="221109.gene:10733868"/>
<dbReference type="KEGG" id="oih:OB1628"/>
<dbReference type="eggNOG" id="COG0621">
    <property type="taxonomic scope" value="Bacteria"/>
</dbReference>
<dbReference type="HOGENOM" id="CLU_018697_2_0_9"/>
<dbReference type="OrthoDB" id="9805215at2"/>
<dbReference type="PhylomeDB" id="Q8EQR4"/>
<dbReference type="Proteomes" id="UP000000822">
    <property type="component" value="Chromosome"/>
</dbReference>
<dbReference type="GO" id="GO:0005829">
    <property type="term" value="C:cytosol"/>
    <property type="evidence" value="ECO:0007669"/>
    <property type="project" value="TreeGrafter"/>
</dbReference>
<dbReference type="GO" id="GO:0051539">
    <property type="term" value="F:4 iron, 4 sulfur cluster binding"/>
    <property type="evidence" value="ECO:0007669"/>
    <property type="project" value="UniProtKB-UniRule"/>
</dbReference>
<dbReference type="GO" id="GO:0046872">
    <property type="term" value="F:metal ion binding"/>
    <property type="evidence" value="ECO:0007669"/>
    <property type="project" value="UniProtKB-KW"/>
</dbReference>
<dbReference type="GO" id="GO:0035597">
    <property type="term" value="F:N6-isopentenyladenosine methylthiotransferase activity"/>
    <property type="evidence" value="ECO:0007669"/>
    <property type="project" value="TreeGrafter"/>
</dbReference>
<dbReference type="CDD" id="cd01335">
    <property type="entry name" value="Radical_SAM"/>
    <property type="match status" value="1"/>
</dbReference>
<dbReference type="FunFam" id="3.40.50.12160:FF:000006">
    <property type="entry name" value="tRNA-2-methylthio-N(6)-dimethylallyladenosine synthase"/>
    <property type="match status" value="1"/>
</dbReference>
<dbReference type="FunFam" id="3.80.30.20:FF:000001">
    <property type="entry name" value="tRNA-2-methylthio-N(6)-dimethylallyladenosine synthase 2"/>
    <property type="match status" value="1"/>
</dbReference>
<dbReference type="Gene3D" id="3.40.50.12160">
    <property type="entry name" value="Methylthiotransferase, N-terminal domain"/>
    <property type="match status" value="1"/>
</dbReference>
<dbReference type="Gene3D" id="3.80.30.20">
    <property type="entry name" value="tm_1862 like domain"/>
    <property type="match status" value="1"/>
</dbReference>
<dbReference type="HAMAP" id="MF_01864">
    <property type="entry name" value="tRNA_metthiotr_MiaB"/>
    <property type="match status" value="1"/>
</dbReference>
<dbReference type="InterPro" id="IPR006638">
    <property type="entry name" value="Elp3/MiaA/NifB-like_rSAM"/>
</dbReference>
<dbReference type="InterPro" id="IPR005839">
    <property type="entry name" value="Methylthiotransferase"/>
</dbReference>
<dbReference type="InterPro" id="IPR020612">
    <property type="entry name" value="Methylthiotransferase_CS"/>
</dbReference>
<dbReference type="InterPro" id="IPR013848">
    <property type="entry name" value="Methylthiotransferase_N"/>
</dbReference>
<dbReference type="InterPro" id="IPR038135">
    <property type="entry name" value="Methylthiotransferase_N_sf"/>
</dbReference>
<dbReference type="InterPro" id="IPR006463">
    <property type="entry name" value="MiaB_methiolase"/>
</dbReference>
<dbReference type="InterPro" id="IPR007197">
    <property type="entry name" value="rSAM"/>
</dbReference>
<dbReference type="InterPro" id="IPR023404">
    <property type="entry name" value="rSAM_horseshoe"/>
</dbReference>
<dbReference type="InterPro" id="IPR002792">
    <property type="entry name" value="TRAM_dom"/>
</dbReference>
<dbReference type="NCBIfam" id="TIGR01574">
    <property type="entry name" value="miaB-methiolase"/>
    <property type="match status" value="1"/>
</dbReference>
<dbReference type="NCBIfam" id="TIGR00089">
    <property type="entry name" value="MiaB/RimO family radical SAM methylthiotransferase"/>
    <property type="match status" value="1"/>
</dbReference>
<dbReference type="PANTHER" id="PTHR43020">
    <property type="entry name" value="CDK5 REGULATORY SUBUNIT-ASSOCIATED PROTEIN 1"/>
    <property type="match status" value="1"/>
</dbReference>
<dbReference type="PANTHER" id="PTHR43020:SF2">
    <property type="entry name" value="MITOCHONDRIAL TRNA METHYLTHIOTRANSFERASE CDK5RAP1"/>
    <property type="match status" value="1"/>
</dbReference>
<dbReference type="Pfam" id="PF04055">
    <property type="entry name" value="Radical_SAM"/>
    <property type="match status" value="1"/>
</dbReference>
<dbReference type="Pfam" id="PF01938">
    <property type="entry name" value="TRAM"/>
    <property type="match status" value="1"/>
</dbReference>
<dbReference type="Pfam" id="PF00919">
    <property type="entry name" value="UPF0004"/>
    <property type="match status" value="1"/>
</dbReference>
<dbReference type="SFLD" id="SFLDF00273">
    <property type="entry name" value="(dimethylallyl)adenosine_tRNA"/>
    <property type="match status" value="1"/>
</dbReference>
<dbReference type="SFLD" id="SFLDG01082">
    <property type="entry name" value="B12-binding_domain_containing"/>
    <property type="match status" value="1"/>
</dbReference>
<dbReference type="SFLD" id="SFLDG01061">
    <property type="entry name" value="methylthiotransferase"/>
    <property type="match status" value="1"/>
</dbReference>
<dbReference type="SMART" id="SM00729">
    <property type="entry name" value="Elp3"/>
    <property type="match status" value="1"/>
</dbReference>
<dbReference type="SUPFAM" id="SSF102114">
    <property type="entry name" value="Radical SAM enzymes"/>
    <property type="match status" value="1"/>
</dbReference>
<dbReference type="PROSITE" id="PS51449">
    <property type="entry name" value="MTTASE_N"/>
    <property type="match status" value="1"/>
</dbReference>
<dbReference type="PROSITE" id="PS01278">
    <property type="entry name" value="MTTASE_RADICAL"/>
    <property type="match status" value="1"/>
</dbReference>
<dbReference type="PROSITE" id="PS51918">
    <property type="entry name" value="RADICAL_SAM"/>
    <property type="match status" value="1"/>
</dbReference>
<dbReference type="PROSITE" id="PS50926">
    <property type="entry name" value="TRAM"/>
    <property type="match status" value="1"/>
</dbReference>
<gene>
    <name evidence="1" type="primary">miaB</name>
    <name type="ordered locus">OB1628</name>
</gene>
<proteinExistence type="inferred from homology"/>
<sequence>MNEQQRKQQSQIRTEQANVDRIKNTSSEDMIAKYFQQEYEPQSPDIKQARKRKREDVQFHYDFSIPEDMEKIGHGKKFLIRTYGCQMNEHDTEVMAGILSEMGYESTTVTEEADIILLNTCAIRENAENKVFGEIGHLKPLKLENPDLIIGVCGCMSQEESVVDRILQKHQHIDLIFGTHNIHRLPHLVKEALFGKEMIVEVWSKEGDIIENLPKARKGKIKAWVNIMYGCDKFCTYCIVPMTRGKERSRRPKDIIQEVRHLVAQGYQEVTLLGQNVNAYGKDFEDIEYGLGDLMNDIHKIDIPRVRFTTSHPRDFDDRLIEVLAQGGNLLDHIHLPVQSGSSEILKKMNRKYTREEYLELVRKIRIAMPNATLTTDIIVGFPNETEEQFEETMTLVEEVGFEAAYTFIYSPREGTPAARKKDDVPEEVKKQRLYRLNELVNKQSAASMKDYAGKKVKVLVEGESKKDPEVLAGYTEKNKLVNFKGPKSSIGKIVEVEITETKTWSLNGVMVENTVEVN</sequence>
<feature type="chain" id="PRO_0000374418" description="tRNA-2-methylthio-N(6)-dimethylallyladenosine synthase">
    <location>
        <begin position="1"/>
        <end position="519"/>
    </location>
</feature>
<feature type="domain" description="MTTase N-terminal" evidence="1">
    <location>
        <begin position="76"/>
        <end position="194"/>
    </location>
</feature>
<feature type="domain" description="Radical SAM core" evidence="2">
    <location>
        <begin position="217"/>
        <end position="450"/>
    </location>
</feature>
<feature type="domain" description="TRAM" evidence="1">
    <location>
        <begin position="450"/>
        <end position="513"/>
    </location>
</feature>
<feature type="region of interest" description="Disordered" evidence="3">
    <location>
        <begin position="1"/>
        <end position="23"/>
    </location>
</feature>
<feature type="compositionally biased region" description="Polar residues" evidence="3">
    <location>
        <begin position="7"/>
        <end position="17"/>
    </location>
</feature>
<feature type="binding site" evidence="1">
    <location>
        <position position="85"/>
    </location>
    <ligand>
        <name>[4Fe-4S] cluster</name>
        <dbReference type="ChEBI" id="CHEBI:49883"/>
        <label>1</label>
    </ligand>
</feature>
<feature type="binding site" evidence="1">
    <location>
        <position position="121"/>
    </location>
    <ligand>
        <name>[4Fe-4S] cluster</name>
        <dbReference type="ChEBI" id="CHEBI:49883"/>
        <label>1</label>
    </ligand>
</feature>
<feature type="binding site" evidence="1">
    <location>
        <position position="155"/>
    </location>
    <ligand>
        <name>[4Fe-4S] cluster</name>
        <dbReference type="ChEBI" id="CHEBI:49883"/>
        <label>1</label>
    </ligand>
</feature>
<feature type="binding site" evidence="1">
    <location>
        <position position="231"/>
    </location>
    <ligand>
        <name>[4Fe-4S] cluster</name>
        <dbReference type="ChEBI" id="CHEBI:49883"/>
        <label>2</label>
        <note>4Fe-4S-S-AdoMet</note>
    </ligand>
</feature>
<feature type="binding site" evidence="1">
    <location>
        <position position="235"/>
    </location>
    <ligand>
        <name>[4Fe-4S] cluster</name>
        <dbReference type="ChEBI" id="CHEBI:49883"/>
        <label>2</label>
        <note>4Fe-4S-S-AdoMet</note>
    </ligand>
</feature>
<feature type="binding site" evidence="1">
    <location>
        <position position="238"/>
    </location>
    <ligand>
        <name>[4Fe-4S] cluster</name>
        <dbReference type="ChEBI" id="CHEBI:49883"/>
        <label>2</label>
        <note>4Fe-4S-S-AdoMet</note>
    </ligand>
</feature>
<comment type="function">
    <text evidence="1">Catalyzes the methylthiolation of N6-(dimethylallyl)adenosine (i(6)A), leading to the formation of 2-methylthio-N6-(dimethylallyl)adenosine (ms(2)i(6)A) at position 37 in tRNAs that read codons beginning with uridine.</text>
</comment>
<comment type="catalytic activity">
    <reaction evidence="1">
        <text>N(6)-dimethylallyladenosine(37) in tRNA + (sulfur carrier)-SH + AH2 + 2 S-adenosyl-L-methionine = 2-methylsulfanyl-N(6)-dimethylallyladenosine(37) in tRNA + (sulfur carrier)-H + 5'-deoxyadenosine + L-methionine + A + S-adenosyl-L-homocysteine + 2 H(+)</text>
        <dbReference type="Rhea" id="RHEA:37067"/>
        <dbReference type="Rhea" id="RHEA-COMP:10375"/>
        <dbReference type="Rhea" id="RHEA-COMP:10376"/>
        <dbReference type="Rhea" id="RHEA-COMP:14737"/>
        <dbReference type="Rhea" id="RHEA-COMP:14739"/>
        <dbReference type="ChEBI" id="CHEBI:13193"/>
        <dbReference type="ChEBI" id="CHEBI:15378"/>
        <dbReference type="ChEBI" id="CHEBI:17319"/>
        <dbReference type="ChEBI" id="CHEBI:17499"/>
        <dbReference type="ChEBI" id="CHEBI:29917"/>
        <dbReference type="ChEBI" id="CHEBI:57844"/>
        <dbReference type="ChEBI" id="CHEBI:57856"/>
        <dbReference type="ChEBI" id="CHEBI:59789"/>
        <dbReference type="ChEBI" id="CHEBI:64428"/>
        <dbReference type="ChEBI" id="CHEBI:74415"/>
        <dbReference type="ChEBI" id="CHEBI:74417"/>
        <dbReference type="EC" id="2.8.4.3"/>
    </reaction>
</comment>
<comment type="cofactor">
    <cofactor evidence="1">
        <name>[4Fe-4S] cluster</name>
        <dbReference type="ChEBI" id="CHEBI:49883"/>
    </cofactor>
    <text evidence="1">Binds 2 [4Fe-4S] clusters. One cluster is coordinated with 3 cysteines and an exchangeable S-adenosyl-L-methionine.</text>
</comment>
<comment type="subunit">
    <text evidence="1">Monomer.</text>
</comment>
<comment type="subcellular location">
    <subcellularLocation>
        <location evidence="1">Cytoplasm</location>
    </subcellularLocation>
</comment>
<comment type="similarity">
    <text evidence="1">Belongs to the methylthiotransferase family. MiaB subfamily.</text>
</comment>
<name>MIAB_OCEIH</name>
<protein>
    <recommendedName>
        <fullName evidence="1">tRNA-2-methylthio-N(6)-dimethylallyladenosine synthase</fullName>
        <ecNumber evidence="1">2.8.4.3</ecNumber>
    </recommendedName>
    <alternativeName>
        <fullName evidence="1">(Dimethylallyl)adenosine tRNA methylthiotransferase MiaB</fullName>
    </alternativeName>
    <alternativeName>
        <fullName evidence="1">tRNA-i(6)A37 methylthiotransferase</fullName>
    </alternativeName>
</protein>